<keyword id="KW-0687">Ribonucleoprotein</keyword>
<keyword id="KW-0689">Ribosomal protein</keyword>
<protein>
    <recommendedName>
        <fullName evidence="1">Large ribosomal subunit protein eL40</fullName>
    </recommendedName>
    <alternativeName>
        <fullName evidence="2">50S ribosomal protein L40e</fullName>
    </alternativeName>
</protein>
<accession>A4WL72</accession>
<evidence type="ECO:0000255" key="1">
    <source>
        <dbReference type="HAMAP-Rule" id="MF_00788"/>
    </source>
</evidence>
<evidence type="ECO:0000305" key="2"/>
<proteinExistence type="inferred from homology"/>
<organism>
    <name type="scientific">Pyrobaculum arsenaticum (strain DSM 13514 / JCM 11321 / PZ6)</name>
    <dbReference type="NCBI Taxonomy" id="340102"/>
    <lineage>
        <taxon>Archaea</taxon>
        <taxon>Thermoproteota</taxon>
        <taxon>Thermoprotei</taxon>
        <taxon>Thermoproteales</taxon>
        <taxon>Thermoproteaceae</taxon>
        <taxon>Pyrobaculum</taxon>
    </lineage>
</organism>
<dbReference type="EMBL" id="CP000660">
    <property type="protein sequence ID" value="ABP51139.1"/>
    <property type="molecule type" value="Genomic_DNA"/>
</dbReference>
<dbReference type="SMR" id="A4WL72"/>
<dbReference type="STRING" id="340102.Pars_1585"/>
<dbReference type="KEGG" id="pas:Pars_1585"/>
<dbReference type="HOGENOM" id="CLU_175093_1_0_2"/>
<dbReference type="OrthoDB" id="45138at2157"/>
<dbReference type="PhylomeDB" id="A4WL72"/>
<dbReference type="Proteomes" id="UP000001567">
    <property type="component" value="Chromosome"/>
</dbReference>
<dbReference type="GO" id="GO:1990904">
    <property type="term" value="C:ribonucleoprotein complex"/>
    <property type="evidence" value="ECO:0007669"/>
    <property type="project" value="UniProtKB-KW"/>
</dbReference>
<dbReference type="GO" id="GO:0005840">
    <property type="term" value="C:ribosome"/>
    <property type="evidence" value="ECO:0007669"/>
    <property type="project" value="UniProtKB-KW"/>
</dbReference>
<dbReference type="GO" id="GO:0003735">
    <property type="term" value="F:structural constituent of ribosome"/>
    <property type="evidence" value="ECO:0007669"/>
    <property type="project" value="InterPro"/>
</dbReference>
<dbReference type="GO" id="GO:0006412">
    <property type="term" value="P:translation"/>
    <property type="evidence" value="ECO:0007669"/>
    <property type="project" value="UniProtKB-UniRule"/>
</dbReference>
<dbReference type="Gene3D" id="4.10.1060.50">
    <property type="match status" value="1"/>
</dbReference>
<dbReference type="HAMAP" id="MF_00788">
    <property type="entry name" value="Ribosomal_eL40"/>
    <property type="match status" value="1"/>
</dbReference>
<dbReference type="InterPro" id="IPR023657">
    <property type="entry name" value="Ribosomal_eL40_arc"/>
</dbReference>
<dbReference type="InterPro" id="IPR001975">
    <property type="entry name" value="Ribosomal_eL40_dom"/>
</dbReference>
<dbReference type="InterPro" id="IPR038587">
    <property type="entry name" value="Ribosomal_eL40_sf"/>
</dbReference>
<dbReference type="InterPro" id="IPR011332">
    <property type="entry name" value="Ribosomal_zn-bd"/>
</dbReference>
<dbReference type="NCBIfam" id="NF003161">
    <property type="entry name" value="PRK04136.1"/>
    <property type="match status" value="1"/>
</dbReference>
<dbReference type="PANTHER" id="PTHR39649">
    <property type="entry name" value="50S RIBOSOMAL PROTEIN L40E"/>
    <property type="match status" value="1"/>
</dbReference>
<dbReference type="PANTHER" id="PTHR39649:SF1">
    <property type="entry name" value="LARGE RIBOSOMAL SUBUNIT PROTEIN EL40"/>
    <property type="match status" value="1"/>
</dbReference>
<dbReference type="Pfam" id="PF01020">
    <property type="entry name" value="Ribosomal_L40e"/>
    <property type="match status" value="1"/>
</dbReference>
<dbReference type="SMART" id="SM01377">
    <property type="entry name" value="Ribosomal_L40e"/>
    <property type="match status" value="1"/>
</dbReference>
<dbReference type="SUPFAM" id="SSF57829">
    <property type="entry name" value="Zn-binding ribosomal proteins"/>
    <property type="match status" value="1"/>
</dbReference>
<gene>
    <name evidence="1" type="primary">rpl40e</name>
    <name type="ordered locus">Pars_1585</name>
</gene>
<reference key="1">
    <citation type="submission" date="2007-04" db="EMBL/GenBank/DDBJ databases">
        <title>Complete sequence of Pyrobaculum arsenaticum DSM 13514.</title>
        <authorList>
            <consortium name="US DOE Joint Genome Institute"/>
            <person name="Copeland A."/>
            <person name="Lucas S."/>
            <person name="Lapidus A."/>
            <person name="Barry K."/>
            <person name="Glavina del Rio T."/>
            <person name="Dalin E."/>
            <person name="Tice H."/>
            <person name="Pitluck S."/>
            <person name="Chain P."/>
            <person name="Malfatti S."/>
            <person name="Shin M."/>
            <person name="Vergez L."/>
            <person name="Schmutz J."/>
            <person name="Larimer F."/>
            <person name="Land M."/>
            <person name="Hauser L."/>
            <person name="Kyrpides N."/>
            <person name="Mikhailova N."/>
            <person name="Cozen A.E."/>
            <person name="Fitz-Gibbon S.T."/>
            <person name="House C.H."/>
            <person name="Saltikov C."/>
            <person name="Lowe T.M."/>
            <person name="Richardson P."/>
        </authorList>
    </citation>
    <scope>NUCLEOTIDE SEQUENCE [LARGE SCALE GENOMIC DNA]</scope>
    <source>
        <strain>ATCC 700994 / DSM 13514 / JCM 11321 / PZ6</strain>
    </source>
</reference>
<comment type="similarity">
    <text evidence="1">Belongs to the eukaryotic ribosomal protein eL40 family.</text>
</comment>
<sequence length="53" mass="6339">MPITLDPEKLAIVMKHRFQYKICRECGARNPPNAEKCRRCHSKNLRPKKFKKK</sequence>
<feature type="chain" id="PRO_1000046891" description="Large ribosomal subunit protein eL40">
    <location>
        <begin position="1"/>
        <end position="53"/>
    </location>
</feature>
<name>RL40_PYRAR</name>